<accession>Q5DTJ9</accession>
<accession>Q7TPW5</accession>
<accession>Q8BZ76</accession>
<keyword id="KW-0009">Actin-binding</keyword>
<keyword id="KW-0175">Coiled coil</keyword>
<keyword id="KW-0963">Cytoplasm</keyword>
<keyword id="KW-1015">Disulfide bond</keyword>
<keyword id="KW-0393">Immunoglobulin domain</keyword>
<keyword id="KW-0539">Nucleus</keyword>
<keyword id="KW-0597">Phosphoprotein</keyword>
<keyword id="KW-1185">Reference proteome</keyword>
<keyword id="KW-0677">Repeat</keyword>
<evidence type="ECO:0000250" key="1"/>
<evidence type="ECO:0000250" key="2">
    <source>
        <dbReference type="UniProtKB" id="Q86TC9"/>
    </source>
</evidence>
<evidence type="ECO:0000255" key="3"/>
<evidence type="ECO:0000255" key="4">
    <source>
        <dbReference type="PROSITE-ProRule" id="PRU00114"/>
    </source>
</evidence>
<evidence type="ECO:0000256" key="5">
    <source>
        <dbReference type="SAM" id="MobiDB-lite"/>
    </source>
</evidence>
<evidence type="ECO:0000305" key="6"/>
<evidence type="ECO:0007744" key="7">
    <source>
    </source>
</evidence>
<sequence>MQEDSIEASTSISQLLRESYLAETRHRGDNERSRAEPSSNPFHFSGPGAAEGGGPEDLPDLSAFLSQEELDESVNLARLAINHDPLERVDEAQARKRLSSDQTKHASKPSFEPAFHQDSSRGPASPKDSPPETKRPQYSSETQSKKVFLNKAADFIEELSSLFKAHSSKRIRPRACKNHKSKTESQNKVLQENSPTFSDLTERRERASVPIPIPADSRDNELNHAIEQREAKRREAELAAGEAAAGDSTPGSSPSSLYYEEPLGQPPRFTQKLRSREVPEGSRVQLDCIVVGIPPPQVRWYCEGKELENSPDIHIVQAGNLHSLTIAEAFEEDTGRYSCFASNIYGTDSTSAEIYIEGVSSSDSEGDPNKEEMNRIQKPNEVSSPPTTSAAIPPAAEAQPLAAQPRVSTVQQCQSPTNYLQGLNGKPIIAAPVFTKMLQNLSASEGQLVVFECRVKGAPSPKVEWYREGTLIEDSPDFRILQKKPRSMAEPEEICTLVIAEVFSEDSGCFTCTASNKYGTVSSIAQLDVRGNEDISDNGALHSANSTTNPAVAEHQPSPLNPQPLSEEQPPKPKLEGVLVNHNEPRSSSRIGLRVHFNLPEDDKDMEASSGSGAANTSQTRPNSFPERFNGQEARIPEPSSPIKEPPPVLAKPKLDSTQLQQLHNQVLLEQQQLQNTSPSSPKESLHMSALNSAPPAVTISSKQVKGPAPQMFNLARPKHFFPASSTSTATVSPSSSPVFTLSNTPQTIQRTVSKESLLMAHPSTQGRSPGGLSIQNEPAPPSPAEPAAPPTAAYSIPSGNQFQPHCVSPTPVSPTGRIQNPVAFLSSVLPSLPSIPPTNAMGLPKSAPSVPSQGLMKKTTKAPQAVSDDYIRETKNSVILDLGKKVNFGDVRSHQQEYKISSFEQRLMNEIEFRLERTPVDESDDEIEHDEIPTGKCIAPIFDKRLKHFRVTEGSPVTFTCKIVGIPVPKVYWFKDGKQISKRNEHCKMRREGDGTCSLHIESTHGDDDGNYTIMAANPQGRISCSGHLMVQGLPIRSRLSPALSHRGRSRMQERDKEPLQERFFRPHFLQAPGDMVAHEGRLCRLDCKVSGLPPPELTWLLNGQPVLPDASHKMLVRETGVHSLLIDPLTQRDAGTYTCVATNKTGQNSFSLELTVVAKEVKKAPVILEKLQNSGVPEGHPVRLEGRVIGMPPPVFYWKKDNETIPFTRERISMHQDTTGYVCLLIQPAKKSDAGWYTLSAKNEAGIVSCTARLDIYAQWHQQIPTPISIRPSGSRYGSLTSKGLDIFSAFSSVESTMLYSCTSRSVVESDEL</sequence>
<proteinExistence type="evidence at protein level"/>
<feature type="chain" id="PRO_0000240490" description="Myopalladin">
    <location>
        <begin position="1"/>
        <end position="1315"/>
    </location>
</feature>
<feature type="domain" description="Ig-like 1">
    <location>
        <begin position="267"/>
        <end position="357"/>
    </location>
</feature>
<feature type="domain" description="Ig-like 2">
    <location>
        <begin position="432"/>
        <end position="528"/>
    </location>
</feature>
<feature type="domain" description="Ig-like 3">
    <location>
        <begin position="941"/>
        <end position="1025"/>
    </location>
</feature>
<feature type="domain" description="Ig-like 4">
    <location>
        <begin position="1068"/>
        <end position="1157"/>
    </location>
</feature>
<feature type="domain" description="Ig-like 5">
    <location>
        <begin position="1167"/>
        <end position="1257"/>
    </location>
</feature>
<feature type="region of interest" description="Disordered" evidence="5">
    <location>
        <begin position="19"/>
        <end position="60"/>
    </location>
</feature>
<feature type="region of interest" description="Disordered" evidence="5">
    <location>
        <begin position="81"/>
        <end position="145"/>
    </location>
</feature>
<feature type="region of interest" description="Disordered" evidence="5">
    <location>
        <begin position="166"/>
        <end position="204"/>
    </location>
</feature>
<feature type="region of interest" description="Disordered" evidence="5">
    <location>
        <begin position="230"/>
        <end position="266"/>
    </location>
</feature>
<feature type="region of interest" description="Disordered" evidence="5">
    <location>
        <begin position="359"/>
        <end position="392"/>
    </location>
</feature>
<feature type="region of interest" description="Disordered" evidence="5">
    <location>
        <begin position="535"/>
        <end position="652"/>
    </location>
</feature>
<feature type="region of interest" description="Disordered" evidence="5">
    <location>
        <begin position="674"/>
        <end position="704"/>
    </location>
</feature>
<feature type="region of interest" description="Disordered" evidence="5">
    <location>
        <begin position="725"/>
        <end position="747"/>
    </location>
</feature>
<feature type="region of interest" description="Disordered" evidence="5">
    <location>
        <begin position="762"/>
        <end position="814"/>
    </location>
</feature>
<feature type="region of interest" description="Disordered" evidence="5">
    <location>
        <begin position="840"/>
        <end position="865"/>
    </location>
</feature>
<feature type="coiled-coil region" evidence="3">
    <location>
        <begin position="219"/>
        <end position="240"/>
    </location>
</feature>
<feature type="compositionally biased region" description="Basic and acidic residues" evidence="5">
    <location>
        <begin position="23"/>
        <end position="35"/>
    </location>
</feature>
<feature type="compositionally biased region" description="Basic and acidic residues" evidence="5">
    <location>
        <begin position="84"/>
        <end position="104"/>
    </location>
</feature>
<feature type="compositionally biased region" description="Basic residues" evidence="5">
    <location>
        <begin position="166"/>
        <end position="180"/>
    </location>
</feature>
<feature type="compositionally biased region" description="Polar residues" evidence="5">
    <location>
        <begin position="184"/>
        <end position="199"/>
    </location>
</feature>
<feature type="compositionally biased region" description="Polar residues" evidence="5">
    <location>
        <begin position="609"/>
        <end position="623"/>
    </location>
</feature>
<feature type="compositionally biased region" description="Low complexity" evidence="5">
    <location>
        <begin position="725"/>
        <end position="741"/>
    </location>
</feature>
<feature type="compositionally biased region" description="Pro residues" evidence="5">
    <location>
        <begin position="779"/>
        <end position="790"/>
    </location>
</feature>
<feature type="modified residue" description="Phosphoserine" evidence="2">
    <location>
        <position position="99"/>
    </location>
</feature>
<feature type="modified residue" description="Phosphoserine" evidence="7">
    <location>
        <position position="129"/>
    </location>
</feature>
<feature type="modified residue" description="Phosphothreonine" evidence="2">
    <location>
        <position position="249"/>
    </location>
</feature>
<feature type="modified residue" description="Phosphoserine" evidence="2">
    <location>
        <position position="641"/>
    </location>
</feature>
<feature type="modified residue" description="Phosphoserine" evidence="2">
    <location>
        <position position="754"/>
    </location>
</feature>
<feature type="modified residue" description="Phosphoserine" evidence="2">
    <location>
        <position position="809"/>
    </location>
</feature>
<feature type="modified residue" description="Phosphoserine" evidence="2">
    <location>
        <position position="814"/>
    </location>
</feature>
<feature type="modified residue" description="Phosphoserine" evidence="2">
    <location>
        <position position="903"/>
    </location>
</feature>
<feature type="modified residue" description="Phosphoserine" evidence="7">
    <location>
        <position position="924"/>
    </location>
</feature>
<feature type="disulfide bond" evidence="4">
    <location>
        <begin position="288"/>
        <end position="339"/>
    </location>
</feature>
<feature type="disulfide bond" evidence="4">
    <location>
        <begin position="453"/>
        <end position="512"/>
    </location>
</feature>
<feature type="disulfide bond" evidence="4">
    <location>
        <begin position="1089"/>
        <end position="1141"/>
    </location>
</feature>
<feature type="sequence conflict" description="In Ref. 3; AAH52872." evidence="6" ref="3">
    <original>E</original>
    <variation>G</variation>
    <location>
        <position position="1120"/>
    </location>
</feature>
<dbReference type="EMBL" id="AK220521">
    <property type="protein sequence ID" value="BAD90521.1"/>
    <property type="status" value="ALT_INIT"/>
    <property type="molecule type" value="mRNA"/>
</dbReference>
<dbReference type="EMBL" id="AK036458">
    <property type="protein sequence ID" value="BAC29439.1"/>
    <property type="molecule type" value="mRNA"/>
</dbReference>
<dbReference type="EMBL" id="BC052872">
    <property type="protein sequence ID" value="AAH52872.1"/>
    <property type="molecule type" value="mRNA"/>
</dbReference>
<dbReference type="CCDS" id="CCDS48584.1"/>
<dbReference type="RefSeq" id="NP_892037.2">
    <property type="nucleotide sequence ID" value="NM_182992.2"/>
</dbReference>
<dbReference type="SMR" id="Q5DTJ9"/>
<dbReference type="BioGRID" id="213060">
    <property type="interactions" value="9"/>
</dbReference>
<dbReference type="FunCoup" id="Q5DTJ9">
    <property type="interactions" value="449"/>
</dbReference>
<dbReference type="IntAct" id="Q5DTJ9">
    <property type="interactions" value="1"/>
</dbReference>
<dbReference type="STRING" id="10090.ENSMUSP00000093240"/>
<dbReference type="GlyGen" id="Q5DTJ9">
    <property type="glycosylation" value="5 sites, 1 O-linked glycan (2 sites)"/>
</dbReference>
<dbReference type="iPTMnet" id="Q5DTJ9"/>
<dbReference type="PhosphoSitePlus" id="Q5DTJ9"/>
<dbReference type="jPOST" id="Q5DTJ9"/>
<dbReference type="PaxDb" id="10090-ENSMUSP00000093240"/>
<dbReference type="PeptideAtlas" id="Q5DTJ9"/>
<dbReference type="ProteomicsDB" id="287599"/>
<dbReference type="Antibodypedia" id="28426">
    <property type="antibodies" value="115 antibodies from 22 providers"/>
</dbReference>
<dbReference type="DNASU" id="68802"/>
<dbReference type="Ensembl" id="ENSMUST00000095580.3">
    <property type="protein sequence ID" value="ENSMUSP00000093240.3"/>
    <property type="gene ID" value="ENSMUSG00000020067.9"/>
</dbReference>
<dbReference type="GeneID" id="68802"/>
<dbReference type="KEGG" id="mmu:68802"/>
<dbReference type="UCSC" id="uc007fjy.2">
    <property type="organism name" value="mouse"/>
</dbReference>
<dbReference type="AGR" id="MGI:1916052"/>
<dbReference type="CTD" id="84665"/>
<dbReference type="MGI" id="MGI:1916052">
    <property type="gene designation" value="Mypn"/>
</dbReference>
<dbReference type="VEuPathDB" id="HostDB:ENSMUSG00000020067"/>
<dbReference type="eggNOG" id="ENOG502QSRV">
    <property type="taxonomic scope" value="Eukaryota"/>
</dbReference>
<dbReference type="GeneTree" id="ENSGT00940000153441"/>
<dbReference type="HOGENOM" id="CLU_006487_2_0_1"/>
<dbReference type="InParanoid" id="Q5DTJ9"/>
<dbReference type="OMA" id="DEMDHKP"/>
<dbReference type="OrthoDB" id="6612025at2759"/>
<dbReference type="PhylomeDB" id="Q5DTJ9"/>
<dbReference type="TreeFam" id="TF343193"/>
<dbReference type="BioGRID-ORCS" id="68802">
    <property type="hits" value="5 hits in 77 CRISPR screens"/>
</dbReference>
<dbReference type="ChiTaRS" id="Mypn">
    <property type="organism name" value="mouse"/>
</dbReference>
<dbReference type="PRO" id="PR:Q5DTJ9"/>
<dbReference type="Proteomes" id="UP000000589">
    <property type="component" value="Chromosome 10"/>
</dbReference>
<dbReference type="RNAct" id="Q5DTJ9">
    <property type="molecule type" value="protein"/>
</dbReference>
<dbReference type="Bgee" id="ENSMUSG00000020067">
    <property type="expression patterns" value="Expressed in gastrocnemius medialis and 90 other cell types or tissues"/>
</dbReference>
<dbReference type="ExpressionAtlas" id="Q5DTJ9">
    <property type="expression patterns" value="baseline and differential"/>
</dbReference>
<dbReference type="GO" id="GO:0005829">
    <property type="term" value="C:cytosol"/>
    <property type="evidence" value="ECO:0007669"/>
    <property type="project" value="Ensembl"/>
</dbReference>
<dbReference type="GO" id="GO:0031674">
    <property type="term" value="C:I band"/>
    <property type="evidence" value="ECO:0000314"/>
    <property type="project" value="BHF-UCL"/>
</dbReference>
<dbReference type="GO" id="GO:0005654">
    <property type="term" value="C:nucleoplasm"/>
    <property type="evidence" value="ECO:0007669"/>
    <property type="project" value="Ensembl"/>
</dbReference>
<dbReference type="GO" id="GO:0030018">
    <property type="term" value="C:Z disc"/>
    <property type="evidence" value="ECO:0007669"/>
    <property type="project" value="UniProtKB-SubCell"/>
</dbReference>
<dbReference type="GO" id="GO:0003779">
    <property type="term" value="F:actin binding"/>
    <property type="evidence" value="ECO:0007669"/>
    <property type="project" value="UniProtKB-KW"/>
</dbReference>
<dbReference type="GO" id="GO:0051371">
    <property type="term" value="F:muscle alpha-actinin binding"/>
    <property type="evidence" value="ECO:0007669"/>
    <property type="project" value="Ensembl"/>
</dbReference>
<dbReference type="GO" id="GO:0017124">
    <property type="term" value="F:SH3 domain binding"/>
    <property type="evidence" value="ECO:0007669"/>
    <property type="project" value="Ensembl"/>
</dbReference>
<dbReference type="GO" id="GO:0045214">
    <property type="term" value="P:sarcomere organization"/>
    <property type="evidence" value="ECO:0007669"/>
    <property type="project" value="Ensembl"/>
</dbReference>
<dbReference type="CDD" id="cd20972">
    <property type="entry name" value="IgI_2_Titin_Z1z2-like"/>
    <property type="match status" value="1"/>
</dbReference>
<dbReference type="FunFam" id="2.60.40.10:FF:000256">
    <property type="entry name" value="myopalladin isoform X1"/>
    <property type="match status" value="1"/>
</dbReference>
<dbReference type="FunFam" id="2.60.40.10:FF:000399">
    <property type="entry name" value="myopalladin isoform X1"/>
    <property type="match status" value="1"/>
</dbReference>
<dbReference type="FunFam" id="2.60.40.10:FF:000032">
    <property type="entry name" value="palladin isoform X1"/>
    <property type="match status" value="2"/>
</dbReference>
<dbReference type="FunFam" id="2.60.40.10:FF:001108">
    <property type="entry name" value="palladin isoform X2"/>
    <property type="match status" value="1"/>
</dbReference>
<dbReference type="Gene3D" id="2.60.40.10">
    <property type="entry name" value="Immunoglobulins"/>
    <property type="match status" value="5"/>
</dbReference>
<dbReference type="InterPro" id="IPR007110">
    <property type="entry name" value="Ig-like_dom"/>
</dbReference>
<dbReference type="InterPro" id="IPR036179">
    <property type="entry name" value="Ig-like_dom_sf"/>
</dbReference>
<dbReference type="InterPro" id="IPR013783">
    <property type="entry name" value="Ig-like_fold"/>
</dbReference>
<dbReference type="InterPro" id="IPR013098">
    <property type="entry name" value="Ig_I-set"/>
</dbReference>
<dbReference type="InterPro" id="IPR003599">
    <property type="entry name" value="Ig_sub"/>
</dbReference>
<dbReference type="InterPro" id="IPR003598">
    <property type="entry name" value="Ig_sub2"/>
</dbReference>
<dbReference type="PANTHER" id="PTHR47633">
    <property type="entry name" value="IMMUNOGLOBULIN"/>
    <property type="match status" value="1"/>
</dbReference>
<dbReference type="PANTHER" id="PTHR47633:SF8">
    <property type="entry name" value="SPEG NEIGHBOR PROTEIN"/>
    <property type="match status" value="1"/>
</dbReference>
<dbReference type="Pfam" id="PF07679">
    <property type="entry name" value="I-set"/>
    <property type="match status" value="5"/>
</dbReference>
<dbReference type="SMART" id="SM00409">
    <property type="entry name" value="IG"/>
    <property type="match status" value="5"/>
</dbReference>
<dbReference type="SMART" id="SM00408">
    <property type="entry name" value="IGc2"/>
    <property type="match status" value="5"/>
</dbReference>
<dbReference type="SUPFAM" id="SSF48726">
    <property type="entry name" value="Immunoglobulin"/>
    <property type="match status" value="5"/>
</dbReference>
<dbReference type="PROSITE" id="PS50835">
    <property type="entry name" value="IG_LIKE"/>
    <property type="match status" value="5"/>
</dbReference>
<gene>
    <name type="primary">Mypn</name>
    <name type="synonym">Kiaa4170</name>
</gene>
<reference key="1">
    <citation type="submission" date="2005-02" db="EMBL/GenBank/DDBJ databases">
        <title>Prediction of the coding sequences of mouse homologues of KIAA gene. The complete nucleotide sequences of mouse KIAA-homologous cDNAs identified by screening of terminal sequences of cDNA clones randomly sampled from size-fractionated libraries.</title>
        <authorList>
            <person name="Okazaki N."/>
            <person name="Kikuno R.F."/>
            <person name="Ohara R."/>
            <person name="Inamoto S."/>
            <person name="Nagase T."/>
            <person name="Ohara O."/>
            <person name="Koga H."/>
        </authorList>
    </citation>
    <scope>NUCLEOTIDE SEQUENCE [LARGE SCALE MRNA]</scope>
    <source>
        <tissue>Fetal brain</tissue>
    </source>
</reference>
<reference key="2">
    <citation type="journal article" date="2005" name="Science">
        <title>The transcriptional landscape of the mammalian genome.</title>
        <authorList>
            <person name="Carninci P."/>
            <person name="Kasukawa T."/>
            <person name="Katayama S."/>
            <person name="Gough J."/>
            <person name="Frith M.C."/>
            <person name="Maeda N."/>
            <person name="Oyama R."/>
            <person name="Ravasi T."/>
            <person name="Lenhard B."/>
            <person name="Wells C."/>
            <person name="Kodzius R."/>
            <person name="Shimokawa K."/>
            <person name="Bajic V.B."/>
            <person name="Brenner S.E."/>
            <person name="Batalov S."/>
            <person name="Forrest A.R."/>
            <person name="Zavolan M."/>
            <person name="Davis M.J."/>
            <person name="Wilming L.G."/>
            <person name="Aidinis V."/>
            <person name="Allen J.E."/>
            <person name="Ambesi-Impiombato A."/>
            <person name="Apweiler R."/>
            <person name="Aturaliya R.N."/>
            <person name="Bailey T.L."/>
            <person name="Bansal M."/>
            <person name="Baxter L."/>
            <person name="Beisel K.W."/>
            <person name="Bersano T."/>
            <person name="Bono H."/>
            <person name="Chalk A.M."/>
            <person name="Chiu K.P."/>
            <person name="Choudhary V."/>
            <person name="Christoffels A."/>
            <person name="Clutterbuck D.R."/>
            <person name="Crowe M.L."/>
            <person name="Dalla E."/>
            <person name="Dalrymple B.P."/>
            <person name="de Bono B."/>
            <person name="Della Gatta G."/>
            <person name="di Bernardo D."/>
            <person name="Down T."/>
            <person name="Engstrom P."/>
            <person name="Fagiolini M."/>
            <person name="Faulkner G."/>
            <person name="Fletcher C.F."/>
            <person name="Fukushima T."/>
            <person name="Furuno M."/>
            <person name="Futaki S."/>
            <person name="Gariboldi M."/>
            <person name="Georgii-Hemming P."/>
            <person name="Gingeras T.R."/>
            <person name="Gojobori T."/>
            <person name="Green R.E."/>
            <person name="Gustincich S."/>
            <person name="Harbers M."/>
            <person name="Hayashi Y."/>
            <person name="Hensch T.K."/>
            <person name="Hirokawa N."/>
            <person name="Hill D."/>
            <person name="Huminiecki L."/>
            <person name="Iacono M."/>
            <person name="Ikeo K."/>
            <person name="Iwama A."/>
            <person name="Ishikawa T."/>
            <person name="Jakt M."/>
            <person name="Kanapin A."/>
            <person name="Katoh M."/>
            <person name="Kawasawa Y."/>
            <person name="Kelso J."/>
            <person name="Kitamura H."/>
            <person name="Kitano H."/>
            <person name="Kollias G."/>
            <person name="Krishnan S.P."/>
            <person name="Kruger A."/>
            <person name="Kummerfeld S.K."/>
            <person name="Kurochkin I.V."/>
            <person name="Lareau L.F."/>
            <person name="Lazarevic D."/>
            <person name="Lipovich L."/>
            <person name="Liu J."/>
            <person name="Liuni S."/>
            <person name="McWilliam S."/>
            <person name="Madan Babu M."/>
            <person name="Madera M."/>
            <person name="Marchionni L."/>
            <person name="Matsuda H."/>
            <person name="Matsuzawa S."/>
            <person name="Miki H."/>
            <person name="Mignone F."/>
            <person name="Miyake S."/>
            <person name="Morris K."/>
            <person name="Mottagui-Tabar S."/>
            <person name="Mulder N."/>
            <person name="Nakano N."/>
            <person name="Nakauchi H."/>
            <person name="Ng P."/>
            <person name="Nilsson R."/>
            <person name="Nishiguchi S."/>
            <person name="Nishikawa S."/>
            <person name="Nori F."/>
            <person name="Ohara O."/>
            <person name="Okazaki Y."/>
            <person name="Orlando V."/>
            <person name="Pang K.C."/>
            <person name="Pavan W.J."/>
            <person name="Pavesi G."/>
            <person name="Pesole G."/>
            <person name="Petrovsky N."/>
            <person name="Piazza S."/>
            <person name="Reed J."/>
            <person name="Reid J.F."/>
            <person name="Ring B.Z."/>
            <person name="Ringwald M."/>
            <person name="Rost B."/>
            <person name="Ruan Y."/>
            <person name="Salzberg S.L."/>
            <person name="Sandelin A."/>
            <person name="Schneider C."/>
            <person name="Schoenbach C."/>
            <person name="Sekiguchi K."/>
            <person name="Semple C.A."/>
            <person name="Seno S."/>
            <person name="Sessa L."/>
            <person name="Sheng Y."/>
            <person name="Shibata Y."/>
            <person name="Shimada H."/>
            <person name="Shimada K."/>
            <person name="Silva D."/>
            <person name="Sinclair B."/>
            <person name="Sperling S."/>
            <person name="Stupka E."/>
            <person name="Sugiura K."/>
            <person name="Sultana R."/>
            <person name="Takenaka Y."/>
            <person name="Taki K."/>
            <person name="Tammoja K."/>
            <person name="Tan S.L."/>
            <person name="Tang S."/>
            <person name="Taylor M.S."/>
            <person name="Tegner J."/>
            <person name="Teichmann S.A."/>
            <person name="Ueda H.R."/>
            <person name="van Nimwegen E."/>
            <person name="Verardo R."/>
            <person name="Wei C.L."/>
            <person name="Yagi K."/>
            <person name="Yamanishi H."/>
            <person name="Zabarovsky E."/>
            <person name="Zhu S."/>
            <person name="Zimmer A."/>
            <person name="Hide W."/>
            <person name="Bult C."/>
            <person name="Grimmond S.M."/>
            <person name="Teasdale R.D."/>
            <person name="Liu E.T."/>
            <person name="Brusic V."/>
            <person name="Quackenbush J."/>
            <person name="Wahlestedt C."/>
            <person name="Mattick J.S."/>
            <person name="Hume D.A."/>
            <person name="Kai C."/>
            <person name="Sasaki D."/>
            <person name="Tomaru Y."/>
            <person name="Fukuda S."/>
            <person name="Kanamori-Katayama M."/>
            <person name="Suzuki M."/>
            <person name="Aoki J."/>
            <person name="Arakawa T."/>
            <person name="Iida J."/>
            <person name="Imamura K."/>
            <person name="Itoh M."/>
            <person name="Kato T."/>
            <person name="Kawaji H."/>
            <person name="Kawagashira N."/>
            <person name="Kawashima T."/>
            <person name="Kojima M."/>
            <person name="Kondo S."/>
            <person name="Konno H."/>
            <person name="Nakano K."/>
            <person name="Ninomiya N."/>
            <person name="Nishio T."/>
            <person name="Okada M."/>
            <person name="Plessy C."/>
            <person name="Shibata K."/>
            <person name="Shiraki T."/>
            <person name="Suzuki S."/>
            <person name="Tagami M."/>
            <person name="Waki K."/>
            <person name="Watahiki A."/>
            <person name="Okamura-Oho Y."/>
            <person name="Suzuki H."/>
            <person name="Kawai J."/>
            <person name="Hayashizaki Y."/>
        </authorList>
    </citation>
    <scope>NUCLEOTIDE SEQUENCE [LARGE SCALE MRNA] OF 1-754</scope>
    <source>
        <strain>C57BL/6J</strain>
        <tissue>Bone</tissue>
    </source>
</reference>
<reference key="3">
    <citation type="journal article" date="2004" name="Genome Res.">
        <title>The status, quality, and expansion of the NIH full-length cDNA project: the Mammalian Gene Collection (MGC).</title>
        <authorList>
            <consortium name="The MGC Project Team"/>
        </authorList>
    </citation>
    <scope>NUCLEOTIDE SEQUENCE [LARGE SCALE MRNA] OF 1053-1315</scope>
    <source>
        <strain>C57BL/6J</strain>
        <tissue>Blastocyst</tissue>
    </source>
</reference>
<reference key="4">
    <citation type="journal article" date="2010" name="Cell">
        <title>A tissue-specific atlas of mouse protein phosphorylation and expression.</title>
        <authorList>
            <person name="Huttlin E.L."/>
            <person name="Jedrychowski M.P."/>
            <person name="Elias J.E."/>
            <person name="Goswami T."/>
            <person name="Rad R."/>
            <person name="Beausoleil S.A."/>
            <person name="Villen J."/>
            <person name="Haas W."/>
            <person name="Sowa M.E."/>
            <person name="Gygi S.P."/>
        </authorList>
    </citation>
    <scope>PHOSPHORYLATION [LARGE SCALE ANALYSIS] AT SER-129 AND SER-924</scope>
    <scope>IDENTIFICATION BY MASS SPECTROMETRY [LARGE SCALE ANALYSIS]</scope>
    <source>
        <tissue>Brown adipose tissue</tissue>
        <tissue>Heart</tissue>
        <tissue>Lung</tissue>
    </source>
</reference>
<comment type="function">
    <text evidence="1">Component of the sarcomere that tethers together nebulin (skeletal muscle) and nebulette (cardiac muscle) to alpha-actinin, at the Z lines.</text>
</comment>
<comment type="subunit">
    <text evidence="1">Interacts with TTN/titin, NEB, NEBL, ACTN2 and CARP.</text>
</comment>
<comment type="subcellular location">
    <subcellularLocation>
        <location evidence="2">Cytoplasm</location>
    </subcellularLocation>
    <subcellularLocation>
        <location evidence="2">Nucleus</location>
    </subcellularLocation>
    <subcellularLocation>
        <location evidence="2">Cytoplasm</location>
        <location evidence="2">Myofibril</location>
        <location evidence="2">Sarcomere</location>
    </subcellularLocation>
    <subcellularLocation>
        <location evidence="2">Cytoplasm</location>
        <location evidence="2">Myofibril</location>
        <location evidence="2">Sarcomere</location>
        <location evidence="2">Z line</location>
    </subcellularLocation>
    <text evidence="2">Bound to sarcomere both at the Z-line periphery and in the central I-band region.</text>
</comment>
<comment type="similarity">
    <text evidence="6">Belongs to the myotilin/palladin family.</text>
</comment>
<comment type="sequence caution" evidence="6">
    <conflict type="erroneous initiation">
        <sequence resource="EMBL-CDS" id="BAD90521"/>
    </conflict>
</comment>
<organism>
    <name type="scientific">Mus musculus</name>
    <name type="common">Mouse</name>
    <dbReference type="NCBI Taxonomy" id="10090"/>
    <lineage>
        <taxon>Eukaryota</taxon>
        <taxon>Metazoa</taxon>
        <taxon>Chordata</taxon>
        <taxon>Craniata</taxon>
        <taxon>Vertebrata</taxon>
        <taxon>Euteleostomi</taxon>
        <taxon>Mammalia</taxon>
        <taxon>Eutheria</taxon>
        <taxon>Euarchontoglires</taxon>
        <taxon>Glires</taxon>
        <taxon>Rodentia</taxon>
        <taxon>Myomorpha</taxon>
        <taxon>Muroidea</taxon>
        <taxon>Muridae</taxon>
        <taxon>Murinae</taxon>
        <taxon>Mus</taxon>
        <taxon>Mus</taxon>
    </lineage>
</organism>
<protein>
    <recommendedName>
        <fullName>Myopalladin</fullName>
    </recommendedName>
</protein>
<name>MYPN_MOUSE</name>